<keyword id="KW-0687">Ribonucleoprotein</keyword>
<keyword id="KW-0689">Ribosomal protein</keyword>
<keyword id="KW-0694">RNA-binding</keyword>
<keyword id="KW-0699">rRNA-binding</keyword>
<keyword id="KW-0820">tRNA-binding</keyword>
<accession>B0BQZ4</accession>
<gene>
    <name evidence="1" type="primary">rpsG</name>
    <name type="ordered locus">APJL_1425</name>
</gene>
<dbReference type="EMBL" id="CP000687">
    <property type="protein sequence ID" value="ABY69979.1"/>
    <property type="molecule type" value="Genomic_DNA"/>
</dbReference>
<dbReference type="RefSeq" id="WP_005619841.1">
    <property type="nucleotide sequence ID" value="NC_010278.1"/>
</dbReference>
<dbReference type="SMR" id="B0BQZ4"/>
<dbReference type="GeneID" id="48599746"/>
<dbReference type="KEGG" id="apj:APJL_1425"/>
<dbReference type="HOGENOM" id="CLU_072226_1_1_6"/>
<dbReference type="Proteomes" id="UP000008547">
    <property type="component" value="Chromosome"/>
</dbReference>
<dbReference type="GO" id="GO:0015935">
    <property type="term" value="C:small ribosomal subunit"/>
    <property type="evidence" value="ECO:0007669"/>
    <property type="project" value="InterPro"/>
</dbReference>
<dbReference type="GO" id="GO:0019843">
    <property type="term" value="F:rRNA binding"/>
    <property type="evidence" value="ECO:0007669"/>
    <property type="project" value="UniProtKB-UniRule"/>
</dbReference>
<dbReference type="GO" id="GO:0003735">
    <property type="term" value="F:structural constituent of ribosome"/>
    <property type="evidence" value="ECO:0007669"/>
    <property type="project" value="InterPro"/>
</dbReference>
<dbReference type="GO" id="GO:0000049">
    <property type="term" value="F:tRNA binding"/>
    <property type="evidence" value="ECO:0007669"/>
    <property type="project" value="UniProtKB-UniRule"/>
</dbReference>
<dbReference type="GO" id="GO:0006412">
    <property type="term" value="P:translation"/>
    <property type="evidence" value="ECO:0007669"/>
    <property type="project" value="UniProtKB-UniRule"/>
</dbReference>
<dbReference type="CDD" id="cd14869">
    <property type="entry name" value="uS7_Bacteria"/>
    <property type="match status" value="1"/>
</dbReference>
<dbReference type="FunFam" id="1.10.455.10:FF:000001">
    <property type="entry name" value="30S ribosomal protein S7"/>
    <property type="match status" value="1"/>
</dbReference>
<dbReference type="Gene3D" id="1.10.455.10">
    <property type="entry name" value="Ribosomal protein S7 domain"/>
    <property type="match status" value="1"/>
</dbReference>
<dbReference type="HAMAP" id="MF_00480_B">
    <property type="entry name" value="Ribosomal_uS7_B"/>
    <property type="match status" value="1"/>
</dbReference>
<dbReference type="InterPro" id="IPR000235">
    <property type="entry name" value="Ribosomal_uS7"/>
</dbReference>
<dbReference type="InterPro" id="IPR005717">
    <property type="entry name" value="Ribosomal_uS7_bac/org-type"/>
</dbReference>
<dbReference type="InterPro" id="IPR020606">
    <property type="entry name" value="Ribosomal_uS7_CS"/>
</dbReference>
<dbReference type="InterPro" id="IPR023798">
    <property type="entry name" value="Ribosomal_uS7_dom"/>
</dbReference>
<dbReference type="InterPro" id="IPR036823">
    <property type="entry name" value="Ribosomal_uS7_dom_sf"/>
</dbReference>
<dbReference type="NCBIfam" id="TIGR01029">
    <property type="entry name" value="rpsG_bact"/>
    <property type="match status" value="1"/>
</dbReference>
<dbReference type="PANTHER" id="PTHR11205">
    <property type="entry name" value="RIBOSOMAL PROTEIN S7"/>
    <property type="match status" value="1"/>
</dbReference>
<dbReference type="Pfam" id="PF00177">
    <property type="entry name" value="Ribosomal_S7"/>
    <property type="match status" value="1"/>
</dbReference>
<dbReference type="PIRSF" id="PIRSF002122">
    <property type="entry name" value="RPS7p_RPS7a_RPS5e_RPS7o"/>
    <property type="match status" value="1"/>
</dbReference>
<dbReference type="SUPFAM" id="SSF47973">
    <property type="entry name" value="Ribosomal protein S7"/>
    <property type="match status" value="1"/>
</dbReference>
<dbReference type="PROSITE" id="PS00052">
    <property type="entry name" value="RIBOSOMAL_S7"/>
    <property type="match status" value="1"/>
</dbReference>
<comment type="function">
    <text evidence="1">One of the primary rRNA binding proteins, it binds directly to 16S rRNA where it nucleates assembly of the head domain of the 30S subunit. Is located at the subunit interface close to the decoding center, probably blocks exit of the E-site tRNA.</text>
</comment>
<comment type="subunit">
    <text evidence="1">Part of the 30S ribosomal subunit. Contacts proteins S9 and S11.</text>
</comment>
<comment type="similarity">
    <text evidence="1">Belongs to the universal ribosomal protein uS7 family.</text>
</comment>
<feature type="chain" id="PRO_1000125884" description="Small ribosomal subunit protein uS7">
    <location>
        <begin position="1"/>
        <end position="156"/>
    </location>
</feature>
<sequence>MPRRRSVEPRKILPDPKFGSELLAKFINVLMVDGKKSTAESIIYGALETLAQRTGKEALEAFEAALENVRPTVEVKSRRVGGSTYQVPVEVRPSRRNALAMRWIVEAARKRGDKSMALRLANELSDAADNKGTAVKKREDVHRMAEANKAFAHFRW</sequence>
<proteinExistence type="inferred from homology"/>
<reference key="1">
    <citation type="journal article" date="2008" name="PLoS ONE">
        <title>Genome biology of Actinobacillus pleuropneumoniae JL03, an isolate of serotype 3 prevalent in China.</title>
        <authorList>
            <person name="Xu Z."/>
            <person name="Zhou Y."/>
            <person name="Li L."/>
            <person name="Zhou R."/>
            <person name="Xiao S."/>
            <person name="Wan Y."/>
            <person name="Zhang S."/>
            <person name="Wang K."/>
            <person name="Li W."/>
            <person name="Li L."/>
            <person name="Jin H."/>
            <person name="Kang M."/>
            <person name="Dalai B."/>
            <person name="Li T."/>
            <person name="Liu L."/>
            <person name="Cheng Y."/>
            <person name="Zhang L."/>
            <person name="Xu T."/>
            <person name="Zheng H."/>
            <person name="Pu S."/>
            <person name="Wang B."/>
            <person name="Gu W."/>
            <person name="Zhang X.L."/>
            <person name="Zhu G.-F."/>
            <person name="Wang S."/>
            <person name="Zhao G.-P."/>
            <person name="Chen H."/>
        </authorList>
    </citation>
    <scope>NUCLEOTIDE SEQUENCE [LARGE SCALE GENOMIC DNA]</scope>
    <source>
        <strain>JL03</strain>
    </source>
</reference>
<protein>
    <recommendedName>
        <fullName evidence="1">Small ribosomal subunit protein uS7</fullName>
    </recommendedName>
    <alternativeName>
        <fullName evidence="2">30S ribosomal protein S7</fullName>
    </alternativeName>
</protein>
<evidence type="ECO:0000255" key="1">
    <source>
        <dbReference type="HAMAP-Rule" id="MF_00480"/>
    </source>
</evidence>
<evidence type="ECO:0000305" key="2"/>
<organism>
    <name type="scientific">Actinobacillus pleuropneumoniae serotype 3 (strain JL03)</name>
    <dbReference type="NCBI Taxonomy" id="434271"/>
    <lineage>
        <taxon>Bacteria</taxon>
        <taxon>Pseudomonadati</taxon>
        <taxon>Pseudomonadota</taxon>
        <taxon>Gammaproteobacteria</taxon>
        <taxon>Pasteurellales</taxon>
        <taxon>Pasteurellaceae</taxon>
        <taxon>Actinobacillus</taxon>
    </lineage>
</organism>
<name>RS7_ACTPJ</name>